<reference evidence="3" key="1">
    <citation type="journal article" date="2021" name="Rapid Commun. Mass Spectrom.">
        <title>Manual mass spectrometry de novo sequencing of the anionic host defense peptides of the Cuban Treefrog Osteopilus septentrionalis.</title>
        <authorList>
            <person name="Samgina T.Y."/>
            <person name="Tolpina M.D."/>
            <person name="Surin A.K."/>
            <person name="Kovalev S.V."/>
            <person name="Bosch R.A."/>
            <person name="Alonso I.P."/>
            <person name="Garcia F.A."/>
            <person name="Gonzalez Lopez L.J."/>
            <person name="Lebedev A.T."/>
        </authorList>
    </citation>
    <scope>PROTEIN SEQUENCE</scope>
    <scope>MASS SPECTROMETRY</scope>
</reference>
<accession>C0HLW5</accession>
<sequence length="17" mass="1612">TDAVANGVHAISGVVDS</sequence>
<proteinExistence type="evidence at protein level"/>
<keyword id="KW-0903">Direct protein sequencing</keyword>
<keyword id="KW-0964">Secreted</keyword>
<protein>
    <recommendedName>
        <fullName evidence="2">Septenin 1d</fullName>
    </recommendedName>
</protein>
<evidence type="ECO:0000269" key="1">
    <source>
    </source>
</evidence>
<evidence type="ECO:0000303" key="2">
    <source>
    </source>
</evidence>
<evidence type="ECO:0000305" key="3"/>
<evidence type="ECO:0000305" key="4">
    <source>
    </source>
</evidence>
<feature type="chain" id="PRO_0000453938" description="Septenin 1d">
    <location>
        <begin position="1"/>
        <end position="17"/>
    </location>
</feature>
<feature type="unsure residue" description="L or I" evidence="1">
    <location>
        <position position="11"/>
    </location>
</feature>
<dbReference type="GO" id="GO:0005576">
    <property type="term" value="C:extracellular region"/>
    <property type="evidence" value="ECO:0007669"/>
    <property type="project" value="UniProtKB-SubCell"/>
</dbReference>
<organism>
    <name type="scientific">Osteopilus septentrionalis</name>
    <name type="common">Cuban treefrog</name>
    <dbReference type="NCBI Taxonomy" id="317373"/>
    <lineage>
        <taxon>Eukaryota</taxon>
        <taxon>Metazoa</taxon>
        <taxon>Chordata</taxon>
        <taxon>Craniata</taxon>
        <taxon>Vertebrata</taxon>
        <taxon>Euteleostomi</taxon>
        <taxon>Amphibia</taxon>
        <taxon>Batrachia</taxon>
        <taxon>Anura</taxon>
        <taxon>Neobatrachia</taxon>
        <taxon>Hyloidea</taxon>
        <taxon>Hylidae</taxon>
        <taxon>Hylinae</taxon>
        <taxon>Lophiohylini</taxon>
        <taxon>Osteopilus</taxon>
    </lineage>
</organism>
<name>SEP1D_OSTSE</name>
<comment type="function">
    <text evidence="2">May act as an antimicrobial peptide.</text>
</comment>
<comment type="subcellular location">
    <subcellularLocation>
        <location evidence="1">Secreted</location>
    </subcellularLocation>
</comment>
<comment type="tissue specificity">
    <text evidence="4">Expressed in skin granular glands.</text>
</comment>
<comment type="mass spectrometry" mass="1610.79" method="Electrospray" evidence="1"/>
<comment type="similarity">
    <text evidence="3">Belongs to the Frog skin active peptide (FSAP) family. Septenin subfamily.</text>
</comment>